<feature type="chain" id="PRO_0000316583" description="Fumarate reductase">
    <location>
        <begin position="1"/>
        <end position="513"/>
    </location>
</feature>
<feature type="active site" evidence="1">
    <location>
        <position position="288"/>
    </location>
</feature>
<feature type="active site" evidence="1">
    <location>
        <position position="311"/>
    </location>
</feature>
<feature type="binding site" evidence="2">
    <location>
        <begin position="41"/>
        <end position="55"/>
    </location>
    <ligand>
        <name>FAD</name>
        <dbReference type="ChEBI" id="CHEBI:57692"/>
    </ligand>
</feature>
<feature type="modified residue" description="Phosphoserine" evidence="1">
    <location>
        <position position="100"/>
    </location>
</feature>
<name>OSM1_SCHPO</name>
<sequence length="513" mass="55484">MRCLTIYTWTFRRLPFIPSTNSASFFSTLRFNMSTANNTQAIVIGGGLAGLSATNTILDLGGNVLLLDKNTAFGGNSVKAASGINAAPTQLQFDQHVSDSVNTFYNDSILSAKSKAKPELLRTLTSKSSSAVDWLSERFGLQMDQLSRLAGHSEPRTHRGTHPDYPFKPLAFVLVDQTEKFAASHPDRLQIKKNARVTRLLTNPNHDKVFGVEYMDLSDKSNHTVYGPVVLATGGYAADYSDDSLLKLYHPEALSLSTTNGPYCTGDGHKMVMSIGGSTVDLDLVQIHPTGFVDPKDPTALTKFLAAEALRGSGAVLLTSQGRRFCDELGYRDYVTGEMMKLKSPVYLVLNSAAAEEVANFIKFYSFKGLMKKMKAEELCSTLNCTKDELASTFSEYNRAAKGEIPDEFGRKYFGKTPLELTDTFTVGEVVPVLHYTMGGVQVDTQSRVLSTNGNVIDGLFAAGEIVGGIHGENRLGGSSLLACVVFGRLAGQGASSTMLRRFIASSTSTASS</sequence>
<accession>O13755</accession>
<dbReference type="EC" id="1.3.1.6"/>
<dbReference type="EMBL" id="CU329670">
    <property type="protein sequence ID" value="CAB16560.1"/>
    <property type="molecule type" value="Genomic_DNA"/>
</dbReference>
<dbReference type="PIR" id="T37806">
    <property type="entry name" value="T37806"/>
</dbReference>
<dbReference type="RefSeq" id="NP_594239.1">
    <property type="nucleotide sequence ID" value="NM_001019662.2"/>
</dbReference>
<dbReference type="SMR" id="O13755"/>
<dbReference type="BioGRID" id="278681">
    <property type="interactions" value="2"/>
</dbReference>
<dbReference type="FunCoup" id="O13755">
    <property type="interactions" value="18"/>
</dbReference>
<dbReference type="STRING" id="284812.O13755"/>
<dbReference type="iPTMnet" id="O13755"/>
<dbReference type="PaxDb" id="4896-SPAC17A2.05.1"/>
<dbReference type="EnsemblFungi" id="SPAC17A2.05.1">
    <property type="protein sequence ID" value="SPAC17A2.05.1:pep"/>
    <property type="gene ID" value="SPAC17A2.05"/>
</dbReference>
<dbReference type="GeneID" id="2542206"/>
<dbReference type="KEGG" id="spo:2542206"/>
<dbReference type="PomBase" id="SPAC17A2.05">
    <property type="gene designation" value="osm1"/>
</dbReference>
<dbReference type="VEuPathDB" id="FungiDB:SPAC17A2.05"/>
<dbReference type="eggNOG" id="KOG2404">
    <property type="taxonomic scope" value="Eukaryota"/>
</dbReference>
<dbReference type="HOGENOM" id="CLU_011398_4_5_1"/>
<dbReference type="InParanoid" id="O13755"/>
<dbReference type="OMA" id="EDLWVVV"/>
<dbReference type="PhylomeDB" id="O13755"/>
<dbReference type="PRO" id="PR:O13755"/>
<dbReference type="Proteomes" id="UP000002485">
    <property type="component" value="Chromosome I"/>
</dbReference>
<dbReference type="GO" id="GO:0005737">
    <property type="term" value="C:cytoplasm"/>
    <property type="evidence" value="ECO:0000318"/>
    <property type="project" value="GO_Central"/>
</dbReference>
<dbReference type="GO" id="GO:0005829">
    <property type="term" value="C:cytosol"/>
    <property type="evidence" value="ECO:0007005"/>
    <property type="project" value="PomBase"/>
</dbReference>
<dbReference type="GO" id="GO:0005739">
    <property type="term" value="C:mitochondrion"/>
    <property type="evidence" value="ECO:0007005"/>
    <property type="project" value="PomBase"/>
</dbReference>
<dbReference type="GO" id="GO:0005634">
    <property type="term" value="C:nucleus"/>
    <property type="evidence" value="ECO:0007669"/>
    <property type="project" value="UniProtKB-SubCell"/>
</dbReference>
<dbReference type="GO" id="GO:0010181">
    <property type="term" value="F:FMN binding"/>
    <property type="evidence" value="ECO:0007669"/>
    <property type="project" value="InterPro"/>
</dbReference>
<dbReference type="GO" id="GO:0016156">
    <property type="term" value="F:fumarate reductase (NADH) activity"/>
    <property type="evidence" value="ECO:0000318"/>
    <property type="project" value="GO_Central"/>
</dbReference>
<dbReference type="GO" id="GO:0006106">
    <property type="term" value="P:fumarate metabolic process"/>
    <property type="evidence" value="ECO:0000250"/>
    <property type="project" value="PomBase"/>
</dbReference>
<dbReference type="FunFam" id="3.90.700.10:FF:000007">
    <property type="entry name" value="NADH-dependent fumarate reductase"/>
    <property type="match status" value="1"/>
</dbReference>
<dbReference type="Gene3D" id="3.50.50.60">
    <property type="entry name" value="FAD/NAD(P)-binding domain"/>
    <property type="match status" value="1"/>
</dbReference>
<dbReference type="Gene3D" id="3.90.700.10">
    <property type="entry name" value="Succinate dehydrogenase/fumarate reductase flavoprotein, catalytic domain"/>
    <property type="match status" value="1"/>
</dbReference>
<dbReference type="InterPro" id="IPR003953">
    <property type="entry name" value="FAD-dep_OxRdtase_2_FAD-bd"/>
</dbReference>
<dbReference type="InterPro" id="IPR050315">
    <property type="entry name" value="FAD-oxidoreductase_2"/>
</dbReference>
<dbReference type="InterPro" id="IPR036188">
    <property type="entry name" value="FAD/NAD-bd_sf"/>
</dbReference>
<dbReference type="InterPro" id="IPR010960">
    <property type="entry name" value="Flavocytochrome_c"/>
</dbReference>
<dbReference type="InterPro" id="IPR027477">
    <property type="entry name" value="Succ_DH/fumarate_Rdtase_cat_sf"/>
</dbReference>
<dbReference type="NCBIfam" id="TIGR01813">
    <property type="entry name" value="flavo_cyto_c"/>
    <property type="match status" value="1"/>
</dbReference>
<dbReference type="PANTHER" id="PTHR43400">
    <property type="entry name" value="FUMARATE REDUCTASE"/>
    <property type="match status" value="1"/>
</dbReference>
<dbReference type="PANTHER" id="PTHR43400:SF1">
    <property type="entry name" value="FUMARATE REDUCTASE"/>
    <property type="match status" value="1"/>
</dbReference>
<dbReference type="Pfam" id="PF00890">
    <property type="entry name" value="FAD_binding_2"/>
    <property type="match status" value="1"/>
</dbReference>
<dbReference type="SUPFAM" id="SSF51905">
    <property type="entry name" value="FAD/NAD(P)-binding domain"/>
    <property type="match status" value="1"/>
</dbReference>
<dbReference type="SUPFAM" id="SSF56425">
    <property type="entry name" value="Succinate dehydrogenase/fumarate reductase flavoprotein, catalytic domain"/>
    <property type="match status" value="1"/>
</dbReference>
<organism>
    <name type="scientific">Schizosaccharomyces pombe (strain 972 / ATCC 24843)</name>
    <name type="common">Fission yeast</name>
    <dbReference type="NCBI Taxonomy" id="284812"/>
    <lineage>
        <taxon>Eukaryota</taxon>
        <taxon>Fungi</taxon>
        <taxon>Dikarya</taxon>
        <taxon>Ascomycota</taxon>
        <taxon>Taphrinomycotina</taxon>
        <taxon>Schizosaccharomycetes</taxon>
        <taxon>Schizosaccharomycetales</taxon>
        <taxon>Schizosaccharomycetaceae</taxon>
        <taxon>Schizosaccharomyces</taxon>
    </lineage>
</organism>
<evidence type="ECO:0000250" key="1"/>
<evidence type="ECO:0000255" key="2"/>
<evidence type="ECO:0000269" key="3">
    <source>
    </source>
</evidence>
<evidence type="ECO:0000305" key="4"/>
<protein>
    <recommendedName>
        <fullName>Fumarate reductase</fullName>
        <shortName>FRDS</shortName>
        <ecNumber>1.3.1.6</ecNumber>
    </recommendedName>
    <alternativeName>
        <fullName>FAD-dependent oxidoreductase</fullName>
    </alternativeName>
    <alternativeName>
        <fullName>NADH-dependent fumarate reductase</fullName>
    </alternativeName>
</protein>
<reference key="1">
    <citation type="journal article" date="2002" name="Nature">
        <title>The genome sequence of Schizosaccharomyces pombe.</title>
        <authorList>
            <person name="Wood V."/>
            <person name="Gwilliam R."/>
            <person name="Rajandream M.A."/>
            <person name="Lyne M.H."/>
            <person name="Lyne R."/>
            <person name="Stewart A."/>
            <person name="Sgouros J.G."/>
            <person name="Peat N."/>
            <person name="Hayles J."/>
            <person name="Baker S.G."/>
            <person name="Basham D."/>
            <person name="Bowman S."/>
            <person name="Brooks K."/>
            <person name="Brown D."/>
            <person name="Brown S."/>
            <person name="Chillingworth T."/>
            <person name="Churcher C.M."/>
            <person name="Collins M."/>
            <person name="Connor R."/>
            <person name="Cronin A."/>
            <person name="Davis P."/>
            <person name="Feltwell T."/>
            <person name="Fraser A."/>
            <person name="Gentles S."/>
            <person name="Goble A."/>
            <person name="Hamlin N."/>
            <person name="Harris D.E."/>
            <person name="Hidalgo J."/>
            <person name="Hodgson G."/>
            <person name="Holroyd S."/>
            <person name="Hornsby T."/>
            <person name="Howarth S."/>
            <person name="Huckle E.J."/>
            <person name="Hunt S."/>
            <person name="Jagels K."/>
            <person name="James K.D."/>
            <person name="Jones L."/>
            <person name="Jones M."/>
            <person name="Leather S."/>
            <person name="McDonald S."/>
            <person name="McLean J."/>
            <person name="Mooney P."/>
            <person name="Moule S."/>
            <person name="Mungall K.L."/>
            <person name="Murphy L.D."/>
            <person name="Niblett D."/>
            <person name="Odell C."/>
            <person name="Oliver K."/>
            <person name="O'Neil S."/>
            <person name="Pearson D."/>
            <person name="Quail M.A."/>
            <person name="Rabbinowitsch E."/>
            <person name="Rutherford K.M."/>
            <person name="Rutter S."/>
            <person name="Saunders D."/>
            <person name="Seeger K."/>
            <person name="Sharp S."/>
            <person name="Skelton J."/>
            <person name="Simmonds M.N."/>
            <person name="Squares R."/>
            <person name="Squares S."/>
            <person name="Stevens K."/>
            <person name="Taylor K."/>
            <person name="Taylor R.G."/>
            <person name="Tivey A."/>
            <person name="Walsh S.V."/>
            <person name="Warren T."/>
            <person name="Whitehead S."/>
            <person name="Woodward J.R."/>
            <person name="Volckaert G."/>
            <person name="Aert R."/>
            <person name="Robben J."/>
            <person name="Grymonprez B."/>
            <person name="Weltjens I."/>
            <person name="Vanstreels E."/>
            <person name="Rieger M."/>
            <person name="Schaefer M."/>
            <person name="Mueller-Auer S."/>
            <person name="Gabel C."/>
            <person name="Fuchs M."/>
            <person name="Duesterhoeft A."/>
            <person name="Fritzc C."/>
            <person name="Holzer E."/>
            <person name="Moestl D."/>
            <person name="Hilbert H."/>
            <person name="Borzym K."/>
            <person name="Langer I."/>
            <person name="Beck A."/>
            <person name="Lehrach H."/>
            <person name="Reinhardt R."/>
            <person name="Pohl T.M."/>
            <person name="Eger P."/>
            <person name="Zimmermann W."/>
            <person name="Wedler H."/>
            <person name="Wambutt R."/>
            <person name="Purnelle B."/>
            <person name="Goffeau A."/>
            <person name="Cadieu E."/>
            <person name="Dreano S."/>
            <person name="Gloux S."/>
            <person name="Lelaure V."/>
            <person name="Mottier S."/>
            <person name="Galibert F."/>
            <person name="Aves S.J."/>
            <person name="Xiang Z."/>
            <person name="Hunt C."/>
            <person name="Moore K."/>
            <person name="Hurst S.M."/>
            <person name="Lucas M."/>
            <person name="Rochet M."/>
            <person name="Gaillardin C."/>
            <person name="Tallada V.A."/>
            <person name="Garzon A."/>
            <person name="Thode G."/>
            <person name="Daga R.R."/>
            <person name="Cruzado L."/>
            <person name="Jimenez J."/>
            <person name="Sanchez M."/>
            <person name="del Rey F."/>
            <person name="Benito J."/>
            <person name="Dominguez A."/>
            <person name="Revuelta J.L."/>
            <person name="Moreno S."/>
            <person name="Armstrong J."/>
            <person name="Forsburg S.L."/>
            <person name="Cerutti L."/>
            <person name="Lowe T."/>
            <person name="McCombie W.R."/>
            <person name="Paulsen I."/>
            <person name="Potashkin J."/>
            <person name="Shpakovski G.V."/>
            <person name="Ussery D."/>
            <person name="Barrell B.G."/>
            <person name="Nurse P."/>
        </authorList>
    </citation>
    <scope>NUCLEOTIDE SEQUENCE [LARGE SCALE GENOMIC DNA]</scope>
    <source>
        <strain>972 / ATCC 24843</strain>
    </source>
</reference>
<reference key="2">
    <citation type="journal article" date="2006" name="Nat. Biotechnol.">
        <title>ORFeome cloning and global analysis of protein localization in the fission yeast Schizosaccharomyces pombe.</title>
        <authorList>
            <person name="Matsuyama A."/>
            <person name="Arai R."/>
            <person name="Yashiroda Y."/>
            <person name="Shirai A."/>
            <person name="Kamata A."/>
            <person name="Sekido S."/>
            <person name="Kobayashi Y."/>
            <person name="Hashimoto A."/>
            <person name="Hamamoto M."/>
            <person name="Hiraoka Y."/>
            <person name="Horinouchi S."/>
            <person name="Yoshida M."/>
        </authorList>
    </citation>
    <scope>SUBCELLULAR LOCATION [LARGE SCALE ANALYSIS]</scope>
</reference>
<keyword id="KW-0963">Cytoplasm</keyword>
<keyword id="KW-0274">FAD</keyword>
<keyword id="KW-0285">Flavoprotein</keyword>
<keyword id="KW-0496">Mitochondrion</keyword>
<keyword id="KW-0520">NAD</keyword>
<keyword id="KW-0539">Nucleus</keyword>
<keyword id="KW-0560">Oxidoreductase</keyword>
<keyword id="KW-0597">Phosphoprotein</keyword>
<keyword id="KW-1185">Reference proteome</keyword>
<proteinExistence type="inferred from homology"/>
<gene>
    <name type="primary">osm1</name>
    <name type="ORF">SPAC17A2.05</name>
</gene>
<comment type="function">
    <text evidence="1">Irreversibly catalyzes the reduction of fumarate to succinate.</text>
</comment>
<comment type="catalytic activity">
    <reaction>
        <text>succinate + NAD(+) = fumarate + NADH + H(+)</text>
        <dbReference type="Rhea" id="RHEA:18281"/>
        <dbReference type="ChEBI" id="CHEBI:15378"/>
        <dbReference type="ChEBI" id="CHEBI:29806"/>
        <dbReference type="ChEBI" id="CHEBI:30031"/>
        <dbReference type="ChEBI" id="CHEBI:57540"/>
        <dbReference type="ChEBI" id="CHEBI:57945"/>
        <dbReference type="EC" id="1.3.1.6"/>
    </reaction>
</comment>
<comment type="cofactor">
    <cofactor evidence="1">
        <name>FAD</name>
        <dbReference type="ChEBI" id="CHEBI:57692"/>
    </cofactor>
    <text evidence="1">Binds 1 FAD per monomer.</text>
</comment>
<comment type="subcellular location">
    <subcellularLocation>
        <location evidence="3">Cytoplasm</location>
    </subcellularLocation>
    <subcellularLocation>
        <location evidence="3">Mitochondrion</location>
    </subcellularLocation>
    <subcellularLocation>
        <location evidence="3">Nucleus</location>
    </subcellularLocation>
</comment>
<comment type="similarity">
    <text evidence="4">Belongs to the FAD-dependent oxidoreductase 2 family. FRD/SDH subfamily.</text>
</comment>